<feature type="chain" id="PRO_0000322987" description="Protein CASC2, isoforms 1/2">
    <location>
        <begin position="1"/>
        <end position="76"/>
    </location>
</feature>
<feature type="region of interest" description="Disordered" evidence="1">
    <location>
        <begin position="1"/>
        <end position="20"/>
    </location>
</feature>
<feature type="splice variant" id="VSP_031978" description="In isoform 2." evidence="2">
    <location>
        <begin position="43"/>
        <end position="63"/>
    </location>
</feature>
<feature type="sequence conflict" description="In Ref. 3; BC112326." evidence="3" ref="3">
    <original>R</original>
    <variation>L</variation>
    <location>
        <position position="5"/>
    </location>
</feature>
<accession>Q8IU53</accession>
<accession>Q2M1K1</accession>
<accession>Q8IUI3</accession>
<organism>
    <name type="scientific">Homo sapiens</name>
    <name type="common">Human</name>
    <dbReference type="NCBI Taxonomy" id="9606"/>
    <lineage>
        <taxon>Eukaryota</taxon>
        <taxon>Metazoa</taxon>
        <taxon>Chordata</taxon>
        <taxon>Craniata</taxon>
        <taxon>Vertebrata</taxon>
        <taxon>Euteleostomi</taxon>
        <taxon>Mammalia</taxon>
        <taxon>Eutheria</taxon>
        <taxon>Euarchontoglires</taxon>
        <taxon>Primates</taxon>
        <taxon>Haplorrhini</taxon>
        <taxon>Catarrhini</taxon>
        <taxon>Hominidae</taxon>
        <taxon>Homo</taxon>
    </lineage>
</organism>
<dbReference type="EMBL" id="AJ535620">
    <property type="protein sequence ID" value="CAD59605.1"/>
    <property type="molecule type" value="mRNA"/>
</dbReference>
<dbReference type="EMBL" id="AJ535621">
    <property type="protein sequence ID" value="CAD59606.1"/>
    <property type="molecule type" value="mRNA"/>
</dbReference>
<dbReference type="EMBL" id="AJ535622">
    <property type="protein sequence ID" value="CAD59607.1"/>
    <property type="molecule type" value="mRNA"/>
</dbReference>
<dbReference type="EMBL" id="CH471066">
    <property type="protein sequence ID" value="EAW49421.1"/>
    <property type="molecule type" value="Genomic_DNA"/>
</dbReference>
<dbReference type="EMBL" id="AC022395">
    <property type="status" value="NOT_ANNOTATED_CDS"/>
    <property type="molecule type" value="Genomic_DNA"/>
</dbReference>
<dbReference type="EMBL" id="BC112326">
    <property type="status" value="NOT_ANNOTATED_CDS"/>
    <property type="molecule type" value="mRNA"/>
</dbReference>
<dbReference type="BioMuta" id="HGNC:22933"/>
<dbReference type="MassIVE" id="Q8IU53"/>
<dbReference type="PeptideAtlas" id="Q8IU53"/>
<dbReference type="AGR" id="HGNC:22933"/>
<dbReference type="GeneCards" id="CASC2"/>
<dbReference type="HGNC" id="HGNC:22933">
    <property type="gene designation" value="CASC2"/>
</dbReference>
<dbReference type="MIM" id="608598">
    <property type="type" value="gene"/>
</dbReference>
<dbReference type="neXtProt" id="NX_Q8IU53"/>
<dbReference type="PathwayCommons" id="Q8IU53"/>
<dbReference type="ChiTaRS" id="CASC2">
    <property type="organism name" value="human"/>
</dbReference>
<dbReference type="Pharos" id="Q8IU53">
    <property type="development level" value="Tdark"/>
</dbReference>
<dbReference type="Proteomes" id="UP000005640">
    <property type="component" value="Unplaced"/>
</dbReference>
<proteinExistence type="predicted"/>
<protein>
    <recommendedName>
        <fullName>Protein CASC2, isoforms 1/2</fullName>
    </recommendedName>
    <alternativeName>
        <fullName>Cancer susceptibility candidate gene 2 protein isoforms 1/2</fullName>
    </alternativeName>
</protein>
<gene>
    <name type="primary">CASC2</name>
    <name type="synonym">C10orf5</name>
</gene>
<evidence type="ECO:0000256" key="1">
    <source>
        <dbReference type="SAM" id="MobiDB-lite"/>
    </source>
</evidence>
<evidence type="ECO:0000303" key="2">
    <source>
    </source>
</evidence>
<evidence type="ECO:0000305" key="3"/>
<keyword id="KW-0025">Alternative splicing</keyword>
<keyword id="KW-1185">Reference proteome</keyword>
<name>CASC2_HUMAN</name>
<sequence>MAGTRGLMLLGPGPVAGPRDVGTCRGRQMEIQKHKDNKKLPQGIIIVFRLQTHTTPQIYTQLKGKLRKFFKEPYSE</sequence>
<comment type="alternative products">
    <event type="alternative splicing"/>
    <isoform>
        <id>Q8IU53-1</id>
        <name>1</name>
        <name>CASC2c</name>
        <sequence type="displayed"/>
    </isoform>
    <isoform>
        <id>Q8IU53-2</id>
        <name>2</name>
        <name>CASC2b</name>
        <sequence type="described" ref="VSP_031978"/>
    </isoform>
    <isoform>
        <id>Q6XLA1-1</id>
        <name>3</name>
        <name>CASC2a</name>
        <sequence type="external"/>
    </isoform>
</comment>
<reference key="1">
    <citation type="journal article" date="2004" name="Hum. Mutat.">
        <title>Identification of a novel candidate gene, CASC2, in a region of common allelic loss at chromosome 10q26 in human endometrial cancer.</title>
        <authorList>
            <person name="Baldinu P."/>
            <person name="Cossu A."/>
            <person name="Manca A."/>
            <person name="Satta M.P."/>
            <person name="Sini M.C."/>
            <person name="Rozzo C."/>
            <person name="Dessole S."/>
            <person name="Cherchi P."/>
            <person name="Gianfrancesco F."/>
            <person name="Pintus A."/>
            <person name="Carboni A."/>
            <person name="Deiana A."/>
            <person name="Tanda F."/>
            <person name="Palmieri G."/>
        </authorList>
    </citation>
    <scope>NUCLEOTIDE SEQUENCE [MRNA] (ISOFORMS 1 AND 2)</scope>
    <source>
        <tissue>B-cell</tissue>
        <tissue>Fetal lung</tissue>
        <tissue>Testis</tissue>
    </source>
</reference>
<reference key="2">
    <citation type="journal article" date="2004" name="Nature">
        <title>The DNA sequence and comparative analysis of human chromosome 10.</title>
        <authorList>
            <person name="Deloukas P."/>
            <person name="Earthrowl M.E."/>
            <person name="Grafham D.V."/>
            <person name="Rubenfield M."/>
            <person name="French L."/>
            <person name="Steward C.A."/>
            <person name="Sims S.K."/>
            <person name="Jones M.C."/>
            <person name="Searle S."/>
            <person name="Scott C."/>
            <person name="Howe K."/>
            <person name="Hunt S.E."/>
            <person name="Andrews T.D."/>
            <person name="Gilbert J.G.R."/>
            <person name="Swarbreck D."/>
            <person name="Ashurst J.L."/>
            <person name="Taylor A."/>
            <person name="Battles J."/>
            <person name="Bird C.P."/>
            <person name="Ainscough R."/>
            <person name="Almeida J.P."/>
            <person name="Ashwell R.I.S."/>
            <person name="Ambrose K.D."/>
            <person name="Babbage A.K."/>
            <person name="Bagguley C.L."/>
            <person name="Bailey J."/>
            <person name="Banerjee R."/>
            <person name="Bates K."/>
            <person name="Beasley H."/>
            <person name="Bray-Allen S."/>
            <person name="Brown A.J."/>
            <person name="Brown J.Y."/>
            <person name="Burford D.C."/>
            <person name="Burrill W."/>
            <person name="Burton J."/>
            <person name="Cahill P."/>
            <person name="Camire D."/>
            <person name="Carter N.P."/>
            <person name="Chapman J.C."/>
            <person name="Clark S.Y."/>
            <person name="Clarke G."/>
            <person name="Clee C.M."/>
            <person name="Clegg S."/>
            <person name="Corby N."/>
            <person name="Coulson A."/>
            <person name="Dhami P."/>
            <person name="Dutta I."/>
            <person name="Dunn M."/>
            <person name="Faulkner L."/>
            <person name="Frankish A."/>
            <person name="Frankland J.A."/>
            <person name="Garner P."/>
            <person name="Garnett J."/>
            <person name="Gribble S."/>
            <person name="Griffiths C."/>
            <person name="Grocock R."/>
            <person name="Gustafson E."/>
            <person name="Hammond S."/>
            <person name="Harley J.L."/>
            <person name="Hart E."/>
            <person name="Heath P.D."/>
            <person name="Ho T.P."/>
            <person name="Hopkins B."/>
            <person name="Horne J."/>
            <person name="Howden P.J."/>
            <person name="Huckle E."/>
            <person name="Hynds C."/>
            <person name="Johnson C."/>
            <person name="Johnson D."/>
            <person name="Kana A."/>
            <person name="Kay M."/>
            <person name="Kimberley A.M."/>
            <person name="Kershaw J.K."/>
            <person name="Kokkinaki M."/>
            <person name="Laird G.K."/>
            <person name="Lawlor S."/>
            <person name="Lee H.M."/>
            <person name="Leongamornlert D.A."/>
            <person name="Laird G."/>
            <person name="Lloyd C."/>
            <person name="Lloyd D.M."/>
            <person name="Loveland J."/>
            <person name="Lovell J."/>
            <person name="McLaren S."/>
            <person name="McLay K.E."/>
            <person name="McMurray A."/>
            <person name="Mashreghi-Mohammadi M."/>
            <person name="Matthews L."/>
            <person name="Milne S."/>
            <person name="Nickerson T."/>
            <person name="Nguyen M."/>
            <person name="Overton-Larty E."/>
            <person name="Palmer S.A."/>
            <person name="Pearce A.V."/>
            <person name="Peck A.I."/>
            <person name="Pelan S."/>
            <person name="Phillimore B."/>
            <person name="Porter K."/>
            <person name="Rice C.M."/>
            <person name="Rogosin A."/>
            <person name="Ross M.T."/>
            <person name="Sarafidou T."/>
            <person name="Sehra H.K."/>
            <person name="Shownkeen R."/>
            <person name="Skuce C.D."/>
            <person name="Smith M."/>
            <person name="Standring L."/>
            <person name="Sycamore N."/>
            <person name="Tester J."/>
            <person name="Thorpe A."/>
            <person name="Torcasso W."/>
            <person name="Tracey A."/>
            <person name="Tromans A."/>
            <person name="Tsolas J."/>
            <person name="Wall M."/>
            <person name="Walsh J."/>
            <person name="Wang H."/>
            <person name="Weinstock K."/>
            <person name="West A.P."/>
            <person name="Willey D.L."/>
            <person name="Whitehead S.L."/>
            <person name="Wilming L."/>
            <person name="Wray P.W."/>
            <person name="Young L."/>
            <person name="Chen Y."/>
            <person name="Lovering R.C."/>
            <person name="Moschonas N.K."/>
            <person name="Siebert R."/>
            <person name="Fechtel K."/>
            <person name="Bentley D."/>
            <person name="Durbin R.M."/>
            <person name="Hubbard T."/>
            <person name="Doucette-Stamm L."/>
            <person name="Beck S."/>
            <person name="Smith D.R."/>
            <person name="Rogers J."/>
        </authorList>
    </citation>
    <scope>NUCLEOTIDE SEQUENCE [LARGE SCALE GENOMIC DNA]</scope>
</reference>
<reference key="3">
    <citation type="submission" date="2005-09" db="EMBL/GenBank/DDBJ databases">
        <authorList>
            <person name="Mural R.J."/>
            <person name="Istrail S."/>
            <person name="Sutton G.G."/>
            <person name="Florea L."/>
            <person name="Halpern A.L."/>
            <person name="Mobarry C.M."/>
            <person name="Lippert R."/>
            <person name="Walenz B."/>
            <person name="Shatkay H."/>
            <person name="Dew I."/>
            <person name="Miller J.R."/>
            <person name="Flanigan M.J."/>
            <person name="Edwards N.J."/>
            <person name="Bolanos R."/>
            <person name="Fasulo D."/>
            <person name="Halldorsson B.V."/>
            <person name="Hannenhalli S."/>
            <person name="Turner R."/>
            <person name="Yooseph S."/>
            <person name="Lu F."/>
            <person name="Nusskern D.R."/>
            <person name="Shue B.C."/>
            <person name="Zheng X.H."/>
            <person name="Zhong F."/>
            <person name="Delcher A.L."/>
            <person name="Huson D.H."/>
            <person name="Kravitz S.A."/>
            <person name="Mouchard L."/>
            <person name="Reinert K."/>
            <person name="Remington K.A."/>
            <person name="Clark A.G."/>
            <person name="Waterman M.S."/>
            <person name="Eichler E.E."/>
            <person name="Adams M.D."/>
            <person name="Hunkapiller M.W."/>
            <person name="Myers E.W."/>
            <person name="Venter J.C."/>
        </authorList>
    </citation>
    <scope>NUCLEOTIDE SEQUENCE [LARGE SCALE GENOMIC DNA]</scope>
</reference>
<reference key="4">
    <citation type="journal article" date="2004" name="Genome Res.">
        <title>The status, quality, and expansion of the NIH full-length cDNA project: the Mammalian Gene Collection (MGC).</title>
        <authorList>
            <consortium name="The MGC Project Team"/>
        </authorList>
    </citation>
    <scope>NUCLEOTIDE SEQUENCE [LARGE SCALE MRNA] (ISOFORM 1)</scope>
    <source>
        <tissue>Brain</tissue>
    </source>
</reference>